<comment type="function">
    <text evidence="1">F(1)F(0) ATP synthase produces ATP from ADP in the presence of a proton or sodium gradient. F-type ATPases consist of two structural domains, F(1) containing the extramembraneous catalytic core and F(0) containing the membrane proton channel, linked together by a central stalk and a peripheral stalk. During catalysis, ATP synthesis in the catalytic domain of F(1) is coupled via a rotary mechanism of the central stalk subunits to proton translocation.</text>
</comment>
<comment type="function">
    <text evidence="1">Key component of the F(0) channel; it plays a direct role in translocation across the membrane. A homomeric c-ring of between 10-14 subunits forms the central stalk rotor element with the F(1) delta and epsilon subunits.</text>
</comment>
<comment type="subunit">
    <text evidence="1">F-type ATPases have 2 components, F(1) - the catalytic core - and F(0) - the membrane proton channel. F(1) has five subunits: alpha(3), beta(3), gamma(1), delta(1), epsilon(1). F(0) has three main subunits: a(1), b(2) and c(10-14). The alpha and beta chains form an alternating ring which encloses part of the gamma chain. F(1) is attached to F(0) by a central stalk formed by the gamma and epsilon chains, while a peripheral stalk is formed by the delta and b chains.</text>
</comment>
<comment type="subcellular location">
    <subcellularLocation>
        <location evidence="1">Cell inner membrane</location>
        <topology evidence="1">Multi-pass membrane protein</topology>
    </subcellularLocation>
</comment>
<comment type="similarity">
    <text evidence="1">Belongs to the ATPase C chain family.</text>
</comment>
<keyword id="KW-0066">ATP synthesis</keyword>
<keyword id="KW-0997">Cell inner membrane</keyword>
<keyword id="KW-1003">Cell membrane</keyword>
<keyword id="KW-0138">CF(0)</keyword>
<keyword id="KW-0375">Hydrogen ion transport</keyword>
<keyword id="KW-0406">Ion transport</keyword>
<keyword id="KW-0446">Lipid-binding</keyword>
<keyword id="KW-0472">Membrane</keyword>
<keyword id="KW-0812">Transmembrane</keyword>
<keyword id="KW-1133">Transmembrane helix</keyword>
<keyword id="KW-0813">Transport</keyword>
<sequence length="74" mass="7668">MDMVSLKFIGIGLMAIGIYGAALGVSNIFSSLLSSIARNPSAAENLQRMALIGAGLAEAMGLFSFVIAMLLIFS</sequence>
<reference key="1">
    <citation type="submission" date="2007-09" db="EMBL/GenBank/DDBJ databases">
        <title>Complete genome sequence of Rickettsia akari.</title>
        <authorList>
            <person name="Madan A."/>
            <person name="Fahey J."/>
            <person name="Helton E."/>
            <person name="Ketteman M."/>
            <person name="Madan A."/>
            <person name="Rodrigues S."/>
            <person name="Sanchez A."/>
            <person name="Whiting M."/>
            <person name="Dasch G."/>
            <person name="Eremeeva M."/>
        </authorList>
    </citation>
    <scope>NUCLEOTIDE SEQUENCE [LARGE SCALE GENOMIC DNA]</scope>
    <source>
        <strain>Hartford</strain>
    </source>
</reference>
<name>ATPL_RICAH</name>
<protein>
    <recommendedName>
        <fullName evidence="1">ATP synthase subunit c</fullName>
    </recommendedName>
    <alternativeName>
        <fullName evidence="1">ATP synthase F(0) sector subunit c</fullName>
    </alternativeName>
    <alternativeName>
        <fullName evidence="1">F-type ATPase subunit c</fullName>
        <shortName evidence="1">F-ATPase subunit c</shortName>
    </alternativeName>
    <alternativeName>
        <fullName evidence="1">Lipid-binding protein</fullName>
    </alternativeName>
</protein>
<accession>A8GLV9</accession>
<feature type="chain" id="PRO_1000184449" description="ATP synthase subunit c">
    <location>
        <begin position="1"/>
        <end position="74"/>
    </location>
</feature>
<feature type="transmembrane region" description="Helical" evidence="1">
    <location>
        <begin position="8"/>
        <end position="28"/>
    </location>
</feature>
<feature type="transmembrane region" description="Helical" evidence="1">
    <location>
        <begin position="52"/>
        <end position="72"/>
    </location>
</feature>
<feature type="site" description="Reversibly protonated during proton transport" evidence="1">
    <location>
        <position position="58"/>
    </location>
</feature>
<gene>
    <name evidence="1" type="primary">atpE</name>
    <name type="ordered locus">A1C_00255</name>
</gene>
<dbReference type="EMBL" id="CP000847">
    <property type="protein sequence ID" value="ABV74384.1"/>
    <property type="molecule type" value="Genomic_DNA"/>
</dbReference>
<dbReference type="RefSeq" id="WP_012013254.1">
    <property type="nucleotide sequence ID" value="NC_009881.1"/>
</dbReference>
<dbReference type="SMR" id="A8GLV9"/>
<dbReference type="STRING" id="293614.A1C_00255"/>
<dbReference type="KEGG" id="rak:A1C_00255"/>
<dbReference type="eggNOG" id="COG0636">
    <property type="taxonomic scope" value="Bacteria"/>
</dbReference>
<dbReference type="HOGENOM" id="CLU_148047_4_0_5"/>
<dbReference type="Proteomes" id="UP000006830">
    <property type="component" value="Chromosome"/>
</dbReference>
<dbReference type="GO" id="GO:0005886">
    <property type="term" value="C:plasma membrane"/>
    <property type="evidence" value="ECO:0007669"/>
    <property type="project" value="UniProtKB-SubCell"/>
</dbReference>
<dbReference type="GO" id="GO:0045259">
    <property type="term" value="C:proton-transporting ATP synthase complex"/>
    <property type="evidence" value="ECO:0007669"/>
    <property type="project" value="UniProtKB-KW"/>
</dbReference>
<dbReference type="GO" id="GO:0033177">
    <property type="term" value="C:proton-transporting two-sector ATPase complex, proton-transporting domain"/>
    <property type="evidence" value="ECO:0007669"/>
    <property type="project" value="InterPro"/>
</dbReference>
<dbReference type="GO" id="GO:0008289">
    <property type="term" value="F:lipid binding"/>
    <property type="evidence" value="ECO:0007669"/>
    <property type="project" value="UniProtKB-KW"/>
</dbReference>
<dbReference type="GO" id="GO:0046933">
    <property type="term" value="F:proton-transporting ATP synthase activity, rotational mechanism"/>
    <property type="evidence" value="ECO:0007669"/>
    <property type="project" value="UniProtKB-UniRule"/>
</dbReference>
<dbReference type="CDD" id="cd18182">
    <property type="entry name" value="ATP-synt_Fo_c_ATP5G3"/>
    <property type="match status" value="1"/>
</dbReference>
<dbReference type="Gene3D" id="1.20.20.10">
    <property type="entry name" value="F1F0 ATP synthase subunit C"/>
    <property type="match status" value="1"/>
</dbReference>
<dbReference type="HAMAP" id="MF_01396">
    <property type="entry name" value="ATP_synth_c_bact"/>
    <property type="match status" value="1"/>
</dbReference>
<dbReference type="InterPro" id="IPR000454">
    <property type="entry name" value="ATP_synth_F0_csu"/>
</dbReference>
<dbReference type="InterPro" id="IPR020537">
    <property type="entry name" value="ATP_synth_F0_csu_DDCD_BS"/>
</dbReference>
<dbReference type="InterPro" id="IPR038662">
    <property type="entry name" value="ATP_synth_F0_csu_sf"/>
</dbReference>
<dbReference type="InterPro" id="IPR002379">
    <property type="entry name" value="ATPase_proteolipid_c-like_dom"/>
</dbReference>
<dbReference type="InterPro" id="IPR035921">
    <property type="entry name" value="F/V-ATP_Csub_sf"/>
</dbReference>
<dbReference type="NCBIfam" id="NF005733">
    <property type="entry name" value="PRK07558.1"/>
    <property type="match status" value="1"/>
</dbReference>
<dbReference type="PANTHER" id="PTHR10031">
    <property type="entry name" value="ATP SYNTHASE LIPID-BINDING PROTEIN, MITOCHONDRIAL"/>
    <property type="match status" value="1"/>
</dbReference>
<dbReference type="PANTHER" id="PTHR10031:SF0">
    <property type="entry name" value="ATPASE PROTEIN 9"/>
    <property type="match status" value="1"/>
</dbReference>
<dbReference type="Pfam" id="PF00137">
    <property type="entry name" value="ATP-synt_C"/>
    <property type="match status" value="1"/>
</dbReference>
<dbReference type="PRINTS" id="PR00124">
    <property type="entry name" value="ATPASEC"/>
</dbReference>
<dbReference type="SUPFAM" id="SSF81333">
    <property type="entry name" value="F1F0 ATP synthase subunit C"/>
    <property type="match status" value="1"/>
</dbReference>
<dbReference type="PROSITE" id="PS00605">
    <property type="entry name" value="ATPASE_C"/>
    <property type="match status" value="1"/>
</dbReference>
<evidence type="ECO:0000255" key="1">
    <source>
        <dbReference type="HAMAP-Rule" id="MF_01396"/>
    </source>
</evidence>
<organism>
    <name type="scientific">Rickettsia akari (strain Hartford)</name>
    <dbReference type="NCBI Taxonomy" id="293614"/>
    <lineage>
        <taxon>Bacteria</taxon>
        <taxon>Pseudomonadati</taxon>
        <taxon>Pseudomonadota</taxon>
        <taxon>Alphaproteobacteria</taxon>
        <taxon>Rickettsiales</taxon>
        <taxon>Rickettsiaceae</taxon>
        <taxon>Rickettsieae</taxon>
        <taxon>Rickettsia</taxon>
        <taxon>spotted fever group</taxon>
    </lineage>
</organism>
<proteinExistence type="inferred from homology"/>